<comment type="function">
    <text evidence="1">Catalyzes the adenylation of flavin mononucleotide (FMN) to form flavin adenine dinucleotide (FAD) coenzyme.</text>
</comment>
<comment type="catalytic activity">
    <reaction>
        <text>FMN + ATP + H(+) = FAD + diphosphate</text>
        <dbReference type="Rhea" id="RHEA:17237"/>
        <dbReference type="ChEBI" id="CHEBI:15378"/>
        <dbReference type="ChEBI" id="CHEBI:30616"/>
        <dbReference type="ChEBI" id="CHEBI:33019"/>
        <dbReference type="ChEBI" id="CHEBI:57692"/>
        <dbReference type="ChEBI" id="CHEBI:58210"/>
        <dbReference type="EC" id="2.7.7.2"/>
    </reaction>
</comment>
<comment type="cofactor">
    <cofactor evidence="1">
        <name>Mg(2+)</name>
        <dbReference type="ChEBI" id="CHEBI:18420"/>
    </cofactor>
</comment>
<comment type="pathway">
    <text>Cofactor biosynthesis; FAD biosynthesis; FAD from FMN: step 1/1.</text>
</comment>
<comment type="subcellular location">
    <subcellularLocation>
        <location evidence="1">Cytoplasm</location>
    </subcellularLocation>
</comment>
<comment type="domain">
    <text>The molybdenum cofactor biosynthesis protein-like region may not be functional.</text>
</comment>
<comment type="similarity">
    <text evidence="2">In the N-terminal section; belongs to the MoaB/Mog family.</text>
</comment>
<comment type="similarity">
    <text evidence="2">In the C-terminal section; belongs to the PAPS reductase family. FAD1 subfamily.</text>
</comment>
<sequence>MTSTSPCLATNVPPVTAGIIIIGDEILKGHTQDTNSFFMCKKLRSIGVQVNKISVIPDDIDIIAGEIAGFSSRYTYVLTSGGIGPTHDDVTFEGVAKAFGEKTFPHPELVSLVQTFFGKSESWCPEMKLAQIPVSSRLNYGTDKRTGDCFKYPLVSVGNVYVFPGIPSLLEKSLEGLDHLFRNDKTHFHYREICVSADEVAIAGVLGEVNGRFRKHVSLGSYPDWSNNYFRVLLVLDSHSEAHLEEAHKFLIEHLPPGVVVPFVKDPVTQAAAQVYQLAHSGSPLGDKVAAALKTLEEALDTYSLEKICVAFNGGKDCTALLHLFHATVQRKFPDQKDKLQALYIRIVSPFPEMEQFMQSTTKRYNLQIYTIQGYIKQALVELKVEQPNLEAVLMGTRRSDPYSRTLTPMCLTDPDWPKYMRVNPLLDWSYRDIWDFLRTLFIPYCILYDKGYTSLGSMENTVKNPALRFTTPAGAESYHPAYKLQNEEEERVSRK</sequence>
<feature type="chain" id="PRO_0000302741" description="FAD synthase">
    <location>
        <begin position="1"/>
        <end position="496"/>
    </location>
</feature>
<feature type="region of interest" description="Molybdenum cofactor biosynthesis protein-like">
    <location>
        <begin position="18"/>
        <end position="109"/>
    </location>
</feature>
<feature type="region of interest" description="FAD synthase">
    <location>
        <begin position="307"/>
        <end position="464"/>
    </location>
</feature>
<accession>Q6ING7</accession>
<proteinExistence type="evidence at transcript level"/>
<gene>
    <name type="primary">flad1</name>
</gene>
<protein>
    <recommendedName>
        <fullName>FAD synthase</fullName>
        <ecNumber>2.7.7.2</ecNumber>
    </recommendedName>
    <alternativeName>
        <fullName>FAD pyrophosphorylase</fullName>
    </alternativeName>
    <alternativeName>
        <fullName>FMN adenylyltransferase</fullName>
    </alternativeName>
    <alternativeName>
        <fullName>Flavin adenine dinucleotide synthase</fullName>
    </alternativeName>
    <domain>
        <recommendedName>
            <fullName>Molybdenum cofactor biosynthesis protein-like region</fullName>
        </recommendedName>
    </domain>
    <domain>
        <recommendedName>
            <fullName>FAD synthase region</fullName>
        </recommendedName>
    </domain>
</protein>
<evidence type="ECO:0000250" key="1"/>
<evidence type="ECO:0000305" key="2"/>
<dbReference type="EC" id="2.7.7.2"/>
<dbReference type="EMBL" id="BC072314">
    <property type="protein sequence ID" value="AAH72314.1"/>
    <property type="molecule type" value="mRNA"/>
</dbReference>
<dbReference type="RefSeq" id="NP_001085184.1">
    <property type="nucleotide sequence ID" value="NM_001091715.1"/>
</dbReference>
<dbReference type="SMR" id="Q6ING7"/>
<dbReference type="DNASU" id="432268"/>
<dbReference type="GeneID" id="432268"/>
<dbReference type="KEGG" id="xla:432268"/>
<dbReference type="AGR" id="Xenbase:XB-GENE-5915969"/>
<dbReference type="CTD" id="432268"/>
<dbReference type="Xenbase" id="XB-GENE-5915969">
    <property type="gene designation" value="flad1.L"/>
</dbReference>
<dbReference type="OrthoDB" id="270728at2759"/>
<dbReference type="UniPathway" id="UPA00277">
    <property type="reaction ID" value="UER00407"/>
</dbReference>
<dbReference type="Proteomes" id="UP000186698">
    <property type="component" value="Chromosome 8L"/>
</dbReference>
<dbReference type="Bgee" id="432268">
    <property type="expression patterns" value="Expressed in camera-type eye and 19 other cell types or tissues"/>
</dbReference>
<dbReference type="GO" id="GO:0005737">
    <property type="term" value="C:cytoplasm"/>
    <property type="evidence" value="ECO:0007669"/>
    <property type="project" value="UniProtKB-SubCell"/>
</dbReference>
<dbReference type="GO" id="GO:0005524">
    <property type="term" value="F:ATP binding"/>
    <property type="evidence" value="ECO:0007669"/>
    <property type="project" value="UniProtKB-KW"/>
</dbReference>
<dbReference type="GO" id="GO:0003919">
    <property type="term" value="F:FMN adenylyltransferase activity"/>
    <property type="evidence" value="ECO:0000318"/>
    <property type="project" value="GO_Central"/>
</dbReference>
<dbReference type="GO" id="GO:0006747">
    <property type="term" value="P:FAD biosynthetic process"/>
    <property type="evidence" value="ECO:0000318"/>
    <property type="project" value="GO_Central"/>
</dbReference>
<dbReference type="CDD" id="cd00885">
    <property type="entry name" value="cinA"/>
    <property type="match status" value="1"/>
</dbReference>
<dbReference type="CDD" id="cd23948">
    <property type="entry name" value="FAD_synthase"/>
    <property type="match status" value="1"/>
</dbReference>
<dbReference type="FunFam" id="3.40.50.620:FF:000113">
    <property type="entry name" value="FAD synthase"/>
    <property type="match status" value="1"/>
</dbReference>
<dbReference type="FunFam" id="3.40.980.10:FF:000007">
    <property type="entry name" value="FAD synthase"/>
    <property type="match status" value="1"/>
</dbReference>
<dbReference type="Gene3D" id="3.40.50.620">
    <property type="entry name" value="HUPs"/>
    <property type="match status" value="1"/>
</dbReference>
<dbReference type="Gene3D" id="3.40.980.10">
    <property type="entry name" value="MoaB/Mog-like domain"/>
    <property type="match status" value="1"/>
</dbReference>
<dbReference type="InterPro" id="IPR012183">
    <property type="entry name" value="FAD_synth_MoaB/Mog-bd"/>
</dbReference>
<dbReference type="InterPro" id="IPR056596">
    <property type="entry name" value="FLAD1_M"/>
</dbReference>
<dbReference type="InterPro" id="IPR036425">
    <property type="entry name" value="MoaB/Mog-like_dom_sf"/>
</dbReference>
<dbReference type="InterPro" id="IPR001453">
    <property type="entry name" value="MoaB/Mog_dom"/>
</dbReference>
<dbReference type="InterPro" id="IPR002500">
    <property type="entry name" value="PAPS_reduct_dom"/>
</dbReference>
<dbReference type="InterPro" id="IPR014729">
    <property type="entry name" value="Rossmann-like_a/b/a_fold"/>
</dbReference>
<dbReference type="PANTHER" id="PTHR23293:SF9">
    <property type="entry name" value="FAD SYNTHASE"/>
    <property type="match status" value="1"/>
</dbReference>
<dbReference type="PANTHER" id="PTHR23293">
    <property type="entry name" value="FAD SYNTHETASE-RELATED FMN ADENYLYLTRANSFERASE"/>
    <property type="match status" value="1"/>
</dbReference>
<dbReference type="Pfam" id="PF24102">
    <property type="entry name" value="FLAD1_M"/>
    <property type="match status" value="1"/>
</dbReference>
<dbReference type="Pfam" id="PF00994">
    <property type="entry name" value="MoCF_biosynth"/>
    <property type="match status" value="1"/>
</dbReference>
<dbReference type="Pfam" id="PF01507">
    <property type="entry name" value="PAPS_reduct"/>
    <property type="match status" value="1"/>
</dbReference>
<dbReference type="PIRSF" id="PIRSF036620">
    <property type="entry name" value="MPTbdFAD"/>
    <property type="match status" value="1"/>
</dbReference>
<dbReference type="SMART" id="SM00852">
    <property type="entry name" value="MoCF_biosynth"/>
    <property type="match status" value="1"/>
</dbReference>
<dbReference type="SUPFAM" id="SSF52402">
    <property type="entry name" value="Adenine nucleotide alpha hydrolases-like"/>
    <property type="match status" value="1"/>
</dbReference>
<dbReference type="SUPFAM" id="SSF53218">
    <property type="entry name" value="Molybdenum cofactor biosynthesis proteins"/>
    <property type="match status" value="1"/>
</dbReference>
<organism>
    <name type="scientific">Xenopus laevis</name>
    <name type="common">African clawed frog</name>
    <dbReference type="NCBI Taxonomy" id="8355"/>
    <lineage>
        <taxon>Eukaryota</taxon>
        <taxon>Metazoa</taxon>
        <taxon>Chordata</taxon>
        <taxon>Craniata</taxon>
        <taxon>Vertebrata</taxon>
        <taxon>Euteleostomi</taxon>
        <taxon>Amphibia</taxon>
        <taxon>Batrachia</taxon>
        <taxon>Anura</taxon>
        <taxon>Pipoidea</taxon>
        <taxon>Pipidae</taxon>
        <taxon>Xenopodinae</taxon>
        <taxon>Xenopus</taxon>
        <taxon>Xenopus</taxon>
    </lineage>
</organism>
<reference key="1">
    <citation type="submission" date="2004-06" db="EMBL/GenBank/DDBJ databases">
        <authorList>
            <consortium name="NIH - Xenopus Gene Collection (XGC) project"/>
        </authorList>
    </citation>
    <scope>NUCLEOTIDE SEQUENCE [LARGE SCALE MRNA]</scope>
    <source>
        <tissue>Ovary</tissue>
    </source>
</reference>
<name>FLAD1_XENLA</name>
<keyword id="KW-0067">ATP-binding</keyword>
<keyword id="KW-0963">Cytoplasm</keyword>
<keyword id="KW-0274">FAD</keyword>
<keyword id="KW-0285">Flavoprotein</keyword>
<keyword id="KW-0288">FMN</keyword>
<keyword id="KW-0547">Nucleotide-binding</keyword>
<keyword id="KW-0548">Nucleotidyltransferase</keyword>
<keyword id="KW-1185">Reference proteome</keyword>
<keyword id="KW-0808">Transferase</keyword>